<keyword id="KW-0030">Aminoacyl-tRNA synthetase</keyword>
<keyword id="KW-0067">ATP-binding</keyword>
<keyword id="KW-0963">Cytoplasm</keyword>
<keyword id="KW-0436">Ligase</keyword>
<keyword id="KW-0547">Nucleotide-binding</keyword>
<keyword id="KW-0648">Protein biosynthesis</keyword>
<keyword id="KW-1185">Reference proteome</keyword>
<organism>
    <name type="scientific">Borreliella burgdorferi (strain ATCC 35210 / DSM 4680 / CIP 102532 / B31)</name>
    <name type="common">Borrelia burgdorferi</name>
    <dbReference type="NCBI Taxonomy" id="224326"/>
    <lineage>
        <taxon>Bacteria</taxon>
        <taxon>Pseudomonadati</taxon>
        <taxon>Spirochaetota</taxon>
        <taxon>Spirochaetia</taxon>
        <taxon>Spirochaetales</taxon>
        <taxon>Borreliaceae</taxon>
        <taxon>Borreliella</taxon>
    </lineage>
</organism>
<accession>O51128</accession>
<feature type="chain" id="PRO_0000176395" description="Asparagine--tRNA ligase">
    <location>
        <begin position="1"/>
        <end position="462"/>
    </location>
</feature>
<dbReference type="EC" id="6.1.1.22" evidence="1"/>
<dbReference type="EMBL" id="AE000783">
    <property type="protein sequence ID" value="AAC66501.2"/>
    <property type="molecule type" value="Genomic_DNA"/>
</dbReference>
<dbReference type="PIR" id="E70112">
    <property type="entry name" value="E70112"/>
</dbReference>
<dbReference type="RefSeq" id="NP_212235.2">
    <property type="nucleotide sequence ID" value="NC_001318.1"/>
</dbReference>
<dbReference type="RefSeq" id="WP_002665039.1">
    <property type="nucleotide sequence ID" value="NC_001318.1"/>
</dbReference>
<dbReference type="SMR" id="O51128"/>
<dbReference type="STRING" id="224326.BB_0101"/>
<dbReference type="PaxDb" id="224326-BB_0101"/>
<dbReference type="EnsemblBacteria" id="AAC66501">
    <property type="protein sequence ID" value="AAC66501"/>
    <property type="gene ID" value="BB_0101"/>
</dbReference>
<dbReference type="KEGG" id="bbu:BB_0101"/>
<dbReference type="PATRIC" id="fig|224326.49.peg.499"/>
<dbReference type="HOGENOM" id="CLU_004553_2_0_12"/>
<dbReference type="OrthoDB" id="9762036at2"/>
<dbReference type="Proteomes" id="UP000001807">
    <property type="component" value="Chromosome"/>
</dbReference>
<dbReference type="GO" id="GO:0005829">
    <property type="term" value="C:cytosol"/>
    <property type="evidence" value="ECO:0000314"/>
    <property type="project" value="CAFA"/>
</dbReference>
<dbReference type="GO" id="GO:0004816">
    <property type="term" value="F:asparagine-tRNA ligase activity"/>
    <property type="evidence" value="ECO:0007669"/>
    <property type="project" value="UniProtKB-UniRule"/>
</dbReference>
<dbReference type="GO" id="GO:0005524">
    <property type="term" value="F:ATP binding"/>
    <property type="evidence" value="ECO:0007669"/>
    <property type="project" value="UniProtKB-UniRule"/>
</dbReference>
<dbReference type="GO" id="GO:0003676">
    <property type="term" value="F:nucleic acid binding"/>
    <property type="evidence" value="ECO:0007669"/>
    <property type="project" value="InterPro"/>
</dbReference>
<dbReference type="GO" id="GO:0006421">
    <property type="term" value="P:asparaginyl-tRNA aminoacylation"/>
    <property type="evidence" value="ECO:0007669"/>
    <property type="project" value="UniProtKB-UniRule"/>
</dbReference>
<dbReference type="CDD" id="cd00776">
    <property type="entry name" value="AsxRS_core"/>
    <property type="match status" value="1"/>
</dbReference>
<dbReference type="CDD" id="cd04318">
    <property type="entry name" value="EcAsnRS_like_N"/>
    <property type="match status" value="1"/>
</dbReference>
<dbReference type="FunFam" id="3.30.930.10:FF:000016">
    <property type="entry name" value="Asparagine--tRNA ligase"/>
    <property type="match status" value="1"/>
</dbReference>
<dbReference type="Gene3D" id="3.30.930.10">
    <property type="entry name" value="Bira Bifunctional Protein, Domain 2"/>
    <property type="match status" value="1"/>
</dbReference>
<dbReference type="Gene3D" id="2.40.50.140">
    <property type="entry name" value="Nucleic acid-binding proteins"/>
    <property type="match status" value="1"/>
</dbReference>
<dbReference type="HAMAP" id="MF_00534">
    <property type="entry name" value="Asn_tRNA_synth"/>
    <property type="match status" value="1"/>
</dbReference>
<dbReference type="InterPro" id="IPR004364">
    <property type="entry name" value="Aa-tRNA-synt_II"/>
</dbReference>
<dbReference type="InterPro" id="IPR006195">
    <property type="entry name" value="aa-tRNA-synth_II"/>
</dbReference>
<dbReference type="InterPro" id="IPR045864">
    <property type="entry name" value="aa-tRNA-synth_II/BPL/LPL"/>
</dbReference>
<dbReference type="InterPro" id="IPR004522">
    <property type="entry name" value="Asn-tRNA-ligase"/>
</dbReference>
<dbReference type="InterPro" id="IPR002312">
    <property type="entry name" value="Asp/Asn-tRNA-synth_IIb"/>
</dbReference>
<dbReference type="InterPro" id="IPR012340">
    <property type="entry name" value="NA-bd_OB-fold"/>
</dbReference>
<dbReference type="InterPro" id="IPR004365">
    <property type="entry name" value="NA-bd_OB_tRNA"/>
</dbReference>
<dbReference type="NCBIfam" id="TIGR00457">
    <property type="entry name" value="asnS"/>
    <property type="match status" value="1"/>
</dbReference>
<dbReference type="NCBIfam" id="NF003037">
    <property type="entry name" value="PRK03932.1"/>
    <property type="match status" value="1"/>
</dbReference>
<dbReference type="PANTHER" id="PTHR22594:SF34">
    <property type="entry name" value="ASPARAGINE--TRNA LIGASE, MITOCHONDRIAL-RELATED"/>
    <property type="match status" value="1"/>
</dbReference>
<dbReference type="PANTHER" id="PTHR22594">
    <property type="entry name" value="ASPARTYL/LYSYL-TRNA SYNTHETASE"/>
    <property type="match status" value="1"/>
</dbReference>
<dbReference type="Pfam" id="PF00152">
    <property type="entry name" value="tRNA-synt_2"/>
    <property type="match status" value="1"/>
</dbReference>
<dbReference type="Pfam" id="PF01336">
    <property type="entry name" value="tRNA_anti-codon"/>
    <property type="match status" value="1"/>
</dbReference>
<dbReference type="PRINTS" id="PR01042">
    <property type="entry name" value="TRNASYNTHASP"/>
</dbReference>
<dbReference type="SUPFAM" id="SSF55681">
    <property type="entry name" value="Class II aaRS and biotin synthetases"/>
    <property type="match status" value="1"/>
</dbReference>
<dbReference type="SUPFAM" id="SSF50249">
    <property type="entry name" value="Nucleic acid-binding proteins"/>
    <property type="match status" value="1"/>
</dbReference>
<dbReference type="PROSITE" id="PS50862">
    <property type="entry name" value="AA_TRNA_LIGASE_II"/>
    <property type="match status" value="1"/>
</dbReference>
<gene>
    <name evidence="1" type="primary">asnS</name>
    <name type="ordered locus">BB_0101</name>
</gene>
<comment type="catalytic activity">
    <reaction evidence="1">
        <text>tRNA(Asn) + L-asparagine + ATP = L-asparaginyl-tRNA(Asn) + AMP + diphosphate + H(+)</text>
        <dbReference type="Rhea" id="RHEA:11180"/>
        <dbReference type="Rhea" id="RHEA-COMP:9659"/>
        <dbReference type="Rhea" id="RHEA-COMP:9674"/>
        <dbReference type="ChEBI" id="CHEBI:15378"/>
        <dbReference type="ChEBI" id="CHEBI:30616"/>
        <dbReference type="ChEBI" id="CHEBI:33019"/>
        <dbReference type="ChEBI" id="CHEBI:58048"/>
        <dbReference type="ChEBI" id="CHEBI:78442"/>
        <dbReference type="ChEBI" id="CHEBI:78515"/>
        <dbReference type="ChEBI" id="CHEBI:456215"/>
        <dbReference type="EC" id="6.1.1.22"/>
    </reaction>
</comment>
<comment type="subunit">
    <text evidence="1">Homodimer.</text>
</comment>
<comment type="subcellular location">
    <subcellularLocation>
        <location evidence="1">Cytoplasm</location>
    </subcellularLocation>
</comment>
<comment type="similarity">
    <text evidence="1">Belongs to the class-II aminoacyl-tRNA synthetase family.</text>
</comment>
<evidence type="ECO:0000255" key="1">
    <source>
        <dbReference type="HAMAP-Rule" id="MF_00534"/>
    </source>
</evidence>
<name>SYN_BORBU</name>
<protein>
    <recommendedName>
        <fullName evidence="1">Asparagine--tRNA ligase</fullName>
        <ecNumber evidence="1">6.1.1.22</ecNumber>
    </recommendedName>
    <alternativeName>
        <fullName evidence="1">Asparaginyl-tRNA synthetase</fullName>
        <shortName evidence="1">AsnRS</shortName>
    </alternativeName>
</protein>
<proteinExistence type="inferred from homology"/>
<sequence length="462" mass="53114">MFASIKDILKNPILNSNVTINGWIRTKRSNGKIGFIEINDGSTLKGIQAVINEEENQFSEKDLKKLTTGTSISLTGLLVESPAKGQNYEIKTHSFNVIGETDPETYPLQKKRHSFEFLREIPHLRIRTNTFGAIARVRNKISYKIHEYFQKNGFFYINTPIITSNDGEGAGEMFRVSTLKFNKLNNALSNIDFKDDFFGKEAFLSVTGQLHGEAYAMALSKIYTFGPTFRAENSNTTRHASEFWMIEPEMAFYKLNDNIALAEDLLKYLLSSILNECSQDMDFLENYIEKGLIKKLENVINSNFEVITYTKAIEILENSKKNFEIKPYWGIDLQTDHERYLTEETFKKPVVVIDYPKNFKAFYMKANKDNKTVKGMDILVPKIGEIIGGSEREDDLQKLENRIKELNLNIEHLNWYLDLRRFGSAPHSGFGLGLERLVQYSTGISNIRDSIPFPRTPKNLYF</sequence>
<reference key="1">
    <citation type="journal article" date="1997" name="Nature">
        <title>Genomic sequence of a Lyme disease spirochaete, Borrelia burgdorferi.</title>
        <authorList>
            <person name="Fraser C.M."/>
            <person name="Casjens S."/>
            <person name="Huang W.M."/>
            <person name="Sutton G.G."/>
            <person name="Clayton R.A."/>
            <person name="Lathigra R."/>
            <person name="White O."/>
            <person name="Ketchum K.A."/>
            <person name="Dodson R.J."/>
            <person name="Hickey E.K."/>
            <person name="Gwinn M.L."/>
            <person name="Dougherty B.A."/>
            <person name="Tomb J.-F."/>
            <person name="Fleischmann R.D."/>
            <person name="Richardson D.L."/>
            <person name="Peterson J.D."/>
            <person name="Kerlavage A.R."/>
            <person name="Quackenbush J."/>
            <person name="Salzberg S.L."/>
            <person name="Hanson M."/>
            <person name="van Vugt R."/>
            <person name="Palmer N."/>
            <person name="Adams M.D."/>
            <person name="Gocayne J.D."/>
            <person name="Weidman J.F."/>
            <person name="Utterback T.R."/>
            <person name="Watthey L."/>
            <person name="McDonald L.A."/>
            <person name="Artiach P."/>
            <person name="Bowman C."/>
            <person name="Garland S.A."/>
            <person name="Fujii C."/>
            <person name="Cotton M.D."/>
            <person name="Horst K."/>
            <person name="Roberts K.M."/>
            <person name="Hatch B."/>
            <person name="Smith H.O."/>
            <person name="Venter J.C."/>
        </authorList>
    </citation>
    <scope>NUCLEOTIDE SEQUENCE [LARGE SCALE GENOMIC DNA]</scope>
    <source>
        <strain>ATCC 35210 / DSM 4680 / CIP 102532 / B31</strain>
    </source>
</reference>